<proteinExistence type="inferred from homology"/>
<feature type="chain" id="PRO_0000208643" description="F-actin-capping protein subunit alpha">
    <location>
        <begin position="1"/>
        <end position="262"/>
    </location>
</feature>
<feature type="sequence conflict" description="In Ref. 2; AAC24885." evidence="2" ref="2">
    <original>Y</original>
    <variation>S</variation>
    <location>
        <position position="116"/>
    </location>
</feature>
<feature type="sequence conflict" description="In Ref. 2; AAC24885." evidence="2" ref="2">
    <location>
        <begin position="209"/>
        <end position="212"/>
    </location>
</feature>
<accession>O74232</accession>
<accession>Q6CVA9</accession>
<evidence type="ECO:0000250" key="1"/>
<evidence type="ECO:0000305" key="2"/>
<organism>
    <name type="scientific">Kluyveromyces lactis (strain ATCC 8585 / CBS 2359 / DSM 70799 / NBRC 1267 / NRRL Y-1140 / WM37)</name>
    <name type="common">Yeast</name>
    <name type="synonym">Candida sphaerica</name>
    <dbReference type="NCBI Taxonomy" id="284590"/>
    <lineage>
        <taxon>Eukaryota</taxon>
        <taxon>Fungi</taxon>
        <taxon>Dikarya</taxon>
        <taxon>Ascomycota</taxon>
        <taxon>Saccharomycotina</taxon>
        <taxon>Saccharomycetes</taxon>
        <taxon>Saccharomycetales</taxon>
        <taxon>Saccharomycetaceae</taxon>
        <taxon>Kluyveromyces</taxon>
    </lineage>
</organism>
<comment type="function">
    <text evidence="1">F-actin-capping proteins bind in a Ca(2+)-independent manner to the fast growing ends of actin filaments (barbed end) thereby blocking the exchange of subunits at these ends. Unlike other capping proteins (such as gelsolin and severin), these proteins do not sever actin filaments (By similarity).</text>
</comment>
<comment type="subunit">
    <text evidence="1">Heterodimer of an alpha and a beta subunit.</text>
</comment>
<comment type="similarity">
    <text evidence="2">Belongs to the F-actin-capping protein alpha subunit family.</text>
</comment>
<gene>
    <name type="primary">CAP1</name>
    <name type="ordered locus">KLLA0B13453g</name>
</gene>
<sequence>MSEFEKIVRDIVFDSPPEEISLVYDNLQVLSDGQSKQQIASIIQEFNEKHRVPAAKGEERYLVSEYNKSGSKYFDPVNKVLFAVDHITREASDIEEYTSEDATQVQSDLYDELSKYVSNFFPDTAVFNVFKIPESDQYAIIVVSNKKSLGDFWTGYWLSEYVYDVDGDTISGEVSVDAHYFEDGNVRFKSTASLESAQTDSPIVSIKQFENEFEKNLINKFQYMNETQFKGLRRRLPVTRAKINWGQGIGNYRLGRDAAQGA</sequence>
<name>CAPZA_KLULA</name>
<protein>
    <recommendedName>
        <fullName>F-actin-capping protein subunit alpha</fullName>
    </recommendedName>
</protein>
<keyword id="KW-0117">Actin capping</keyword>
<keyword id="KW-0009">Actin-binding</keyword>
<keyword id="KW-1185">Reference proteome</keyword>
<reference key="1">
    <citation type="journal article" date="2004" name="Nature">
        <title>Genome evolution in yeasts.</title>
        <authorList>
            <person name="Dujon B."/>
            <person name="Sherman D."/>
            <person name="Fischer G."/>
            <person name="Durrens P."/>
            <person name="Casaregola S."/>
            <person name="Lafontaine I."/>
            <person name="de Montigny J."/>
            <person name="Marck C."/>
            <person name="Neuveglise C."/>
            <person name="Talla E."/>
            <person name="Goffard N."/>
            <person name="Frangeul L."/>
            <person name="Aigle M."/>
            <person name="Anthouard V."/>
            <person name="Babour A."/>
            <person name="Barbe V."/>
            <person name="Barnay S."/>
            <person name="Blanchin S."/>
            <person name="Beckerich J.-M."/>
            <person name="Beyne E."/>
            <person name="Bleykasten C."/>
            <person name="Boisrame A."/>
            <person name="Boyer J."/>
            <person name="Cattolico L."/>
            <person name="Confanioleri F."/>
            <person name="de Daruvar A."/>
            <person name="Despons L."/>
            <person name="Fabre E."/>
            <person name="Fairhead C."/>
            <person name="Ferry-Dumazet H."/>
            <person name="Groppi A."/>
            <person name="Hantraye F."/>
            <person name="Hennequin C."/>
            <person name="Jauniaux N."/>
            <person name="Joyet P."/>
            <person name="Kachouri R."/>
            <person name="Kerrest A."/>
            <person name="Koszul R."/>
            <person name="Lemaire M."/>
            <person name="Lesur I."/>
            <person name="Ma L."/>
            <person name="Muller H."/>
            <person name="Nicaud J.-M."/>
            <person name="Nikolski M."/>
            <person name="Oztas S."/>
            <person name="Ozier-Kalogeropoulos O."/>
            <person name="Pellenz S."/>
            <person name="Potier S."/>
            <person name="Richard G.-F."/>
            <person name="Straub M.-L."/>
            <person name="Suleau A."/>
            <person name="Swennen D."/>
            <person name="Tekaia F."/>
            <person name="Wesolowski-Louvel M."/>
            <person name="Westhof E."/>
            <person name="Wirth B."/>
            <person name="Zeniou-Meyer M."/>
            <person name="Zivanovic Y."/>
            <person name="Bolotin-Fukuhara M."/>
            <person name="Thierry A."/>
            <person name="Bouchier C."/>
            <person name="Caudron B."/>
            <person name="Scarpelli C."/>
            <person name="Gaillardin C."/>
            <person name="Weissenbach J."/>
            <person name="Wincker P."/>
            <person name="Souciet J.-L."/>
        </authorList>
    </citation>
    <scope>NUCLEOTIDE SEQUENCE [LARGE SCALE GENOMIC DNA]</scope>
    <source>
        <strain>ATCC 8585 / CBS 2359 / DSM 70799 / NBRC 1267 / NRRL Y-1140 / WM37</strain>
    </source>
</reference>
<reference key="2">
    <citation type="submission" date="1998-06" db="EMBL/GenBank/DDBJ databases">
        <title>DNA sequence of the SFT1 gene from Kluyveromyces lactis.</title>
        <authorList>
            <person name="Banfield D.K."/>
        </authorList>
    </citation>
    <scope>NUCLEOTIDE SEQUENCE [GENOMIC DNA] OF 45-262</scope>
</reference>
<dbReference type="EMBL" id="CR382122">
    <property type="protein sequence ID" value="CAH02523.1"/>
    <property type="molecule type" value="Genomic_DNA"/>
</dbReference>
<dbReference type="EMBL" id="AF072674">
    <property type="protein sequence ID" value="AAC24885.1"/>
    <property type="molecule type" value="Genomic_DNA"/>
</dbReference>
<dbReference type="RefSeq" id="XP_452130.1">
    <property type="nucleotide sequence ID" value="XM_452130.1"/>
</dbReference>
<dbReference type="SMR" id="O74232"/>
<dbReference type="FunCoup" id="O74232">
    <property type="interactions" value="864"/>
</dbReference>
<dbReference type="STRING" id="284590.O74232"/>
<dbReference type="PaxDb" id="284590-O74232"/>
<dbReference type="KEGG" id="kla:KLLA0_B13453g"/>
<dbReference type="eggNOG" id="KOG0836">
    <property type="taxonomic scope" value="Eukaryota"/>
</dbReference>
<dbReference type="HOGENOM" id="CLU_045161_3_0_1"/>
<dbReference type="InParanoid" id="O74232"/>
<dbReference type="OMA" id="VACIEDH"/>
<dbReference type="Proteomes" id="UP000000598">
    <property type="component" value="Chromosome B"/>
</dbReference>
<dbReference type="GO" id="GO:0030479">
    <property type="term" value="C:actin cortical patch"/>
    <property type="evidence" value="ECO:0007669"/>
    <property type="project" value="TreeGrafter"/>
</dbReference>
<dbReference type="GO" id="GO:0008290">
    <property type="term" value="C:F-actin capping protein complex"/>
    <property type="evidence" value="ECO:0007669"/>
    <property type="project" value="InterPro"/>
</dbReference>
<dbReference type="GO" id="GO:0051015">
    <property type="term" value="F:actin filament binding"/>
    <property type="evidence" value="ECO:0007669"/>
    <property type="project" value="TreeGrafter"/>
</dbReference>
<dbReference type="GO" id="GO:0030036">
    <property type="term" value="P:actin cytoskeleton organization"/>
    <property type="evidence" value="ECO:0007669"/>
    <property type="project" value="TreeGrafter"/>
</dbReference>
<dbReference type="GO" id="GO:0051016">
    <property type="term" value="P:barbed-end actin filament capping"/>
    <property type="evidence" value="ECO:0007669"/>
    <property type="project" value="InterPro"/>
</dbReference>
<dbReference type="Gene3D" id="3.30.1140.60">
    <property type="entry name" value="F-actin capping protein, alpha subunit"/>
    <property type="match status" value="1"/>
</dbReference>
<dbReference type="Gene3D" id="3.90.1150.210">
    <property type="entry name" value="F-actin capping protein, beta subunit"/>
    <property type="match status" value="1"/>
</dbReference>
<dbReference type="InterPro" id="IPR002189">
    <property type="entry name" value="CapZ_alpha"/>
</dbReference>
<dbReference type="InterPro" id="IPR037282">
    <property type="entry name" value="CapZ_alpha/beta"/>
</dbReference>
<dbReference type="InterPro" id="IPR042276">
    <property type="entry name" value="CapZ_alpha/beta_2"/>
</dbReference>
<dbReference type="InterPro" id="IPR042489">
    <property type="entry name" value="CapZ_alpha_1"/>
</dbReference>
<dbReference type="InterPro" id="IPR017865">
    <property type="entry name" value="F-actin_cap_asu_CS"/>
</dbReference>
<dbReference type="PANTHER" id="PTHR10653">
    <property type="entry name" value="F-ACTIN-CAPPING PROTEIN SUBUNIT ALPHA"/>
    <property type="match status" value="1"/>
</dbReference>
<dbReference type="PANTHER" id="PTHR10653:SF0">
    <property type="entry name" value="F-ACTIN-CAPPING PROTEIN SUBUNIT ALPHA"/>
    <property type="match status" value="1"/>
</dbReference>
<dbReference type="Pfam" id="PF01267">
    <property type="entry name" value="F-actin_cap_A"/>
    <property type="match status" value="1"/>
</dbReference>
<dbReference type="PRINTS" id="PR00191">
    <property type="entry name" value="FACTINCAPA"/>
</dbReference>
<dbReference type="SUPFAM" id="SSF90096">
    <property type="entry name" value="Subunits of heterodimeric actin filament capping protein Capz"/>
    <property type="match status" value="1"/>
</dbReference>
<dbReference type="PROSITE" id="PS00748">
    <property type="entry name" value="F_ACTIN_CAPPING_A_1"/>
    <property type="match status" value="1"/>
</dbReference>
<dbReference type="PROSITE" id="PS00749">
    <property type="entry name" value="F_ACTIN_CAPPING_A_2"/>
    <property type="match status" value="1"/>
</dbReference>